<organism>
    <name type="scientific">Archaeoglobus fulgidus (strain ATCC 49558 / DSM 4304 / JCM 9628 / NBRC 100126 / VC-16)</name>
    <dbReference type="NCBI Taxonomy" id="224325"/>
    <lineage>
        <taxon>Archaea</taxon>
        <taxon>Methanobacteriati</taxon>
        <taxon>Methanobacteriota</taxon>
        <taxon>Archaeoglobi</taxon>
        <taxon>Archaeoglobales</taxon>
        <taxon>Archaeoglobaceae</taxon>
        <taxon>Archaeoglobus</taxon>
    </lineage>
</organism>
<reference key="1">
    <citation type="journal article" date="1997" name="Nature">
        <title>The complete genome sequence of the hyperthermophilic, sulphate-reducing archaeon Archaeoglobus fulgidus.</title>
        <authorList>
            <person name="Klenk H.-P."/>
            <person name="Clayton R.A."/>
            <person name="Tomb J.-F."/>
            <person name="White O."/>
            <person name="Nelson K.E."/>
            <person name="Ketchum K.A."/>
            <person name="Dodson R.J."/>
            <person name="Gwinn M.L."/>
            <person name="Hickey E.K."/>
            <person name="Peterson J.D."/>
            <person name="Richardson D.L."/>
            <person name="Kerlavage A.R."/>
            <person name="Graham D.E."/>
            <person name="Kyrpides N.C."/>
            <person name="Fleischmann R.D."/>
            <person name="Quackenbush J."/>
            <person name="Lee N.H."/>
            <person name="Sutton G.G."/>
            <person name="Gill S.R."/>
            <person name="Kirkness E.F."/>
            <person name="Dougherty B.A."/>
            <person name="McKenney K."/>
            <person name="Adams M.D."/>
            <person name="Loftus B.J."/>
            <person name="Peterson S.N."/>
            <person name="Reich C.I."/>
            <person name="McNeil L.K."/>
            <person name="Badger J.H."/>
            <person name="Glodek A."/>
            <person name="Zhou L."/>
            <person name="Overbeek R."/>
            <person name="Gocayne J.D."/>
            <person name="Weidman J.F."/>
            <person name="McDonald L.A."/>
            <person name="Utterback T.R."/>
            <person name="Cotton M.D."/>
            <person name="Spriggs T."/>
            <person name="Artiach P."/>
            <person name="Kaine B.P."/>
            <person name="Sykes S.M."/>
            <person name="Sadow P.W."/>
            <person name="D'Andrea K.P."/>
            <person name="Bowman C."/>
            <person name="Fujii C."/>
            <person name="Garland S.A."/>
            <person name="Mason T.M."/>
            <person name="Olsen G.J."/>
            <person name="Fraser C.M."/>
            <person name="Smith H.O."/>
            <person name="Woese C.R."/>
            <person name="Venter J.C."/>
        </authorList>
    </citation>
    <scope>NUCLEOTIDE SEQUENCE [LARGE SCALE GENOMIC DNA]</scope>
    <source>
        <strain>ATCC 49558 / DSM 4304 / JCM 9628 / NBRC 100126 / VC-16</strain>
    </source>
</reference>
<feature type="chain" id="PRO_0000157288" description="Uncharacterized protein AF_1724">
    <location>
        <begin position="1"/>
        <end position="305"/>
    </location>
</feature>
<gene>
    <name type="ordered locus">AF_1724</name>
</gene>
<comment type="similarity">
    <text evidence="1">Belongs to the ADP-ribosylglycohydrolase family.</text>
</comment>
<protein>
    <recommendedName>
        <fullName>Uncharacterized protein AF_1724</fullName>
        <ecNumber>3.2.2.-</ecNumber>
    </recommendedName>
</protein>
<evidence type="ECO:0000305" key="1"/>
<accession>O28550</accession>
<proteinExistence type="inferred from homology"/>
<name>Y1724_ARCFU</name>
<sequence length="305" mass="33782">MEEKFRNCILGLAVGDALGMPVEGLSIENIRQLYGEVRDFLPSPYGDLNAGEWTDDTEQMVVLAESILETVYFDPENFAERLKRWFLETNSRRIGPSSTKAISNLMRGVHWTRAGVFSDTCGAAMRVAPIGLVYHFSLNLVERYAEISARVTHTGTAAIGGAVAVAVAIACNVLDFSDEEMLEEVLRRVEAYDNLLAEKIRYANEISDRDVEYAVEKLGNSISSLDVVPMAFYSYFAGKDFEESLIKAVNAGGDADSIAAICGAIKGAKGFAIPERWLEGLKDREFLEELATKLYELHMRIVKLT</sequence>
<keyword id="KW-0378">Hydrolase</keyword>
<keyword id="KW-1185">Reference proteome</keyword>
<dbReference type="EC" id="3.2.2.-"/>
<dbReference type="EMBL" id="AE000782">
    <property type="protein sequence ID" value="AAB89527.1"/>
    <property type="molecule type" value="Genomic_DNA"/>
</dbReference>
<dbReference type="PIR" id="C69465">
    <property type="entry name" value="C69465"/>
</dbReference>
<dbReference type="RefSeq" id="WP_010879220.1">
    <property type="nucleotide sequence ID" value="NC_000917.1"/>
</dbReference>
<dbReference type="SMR" id="O28550"/>
<dbReference type="STRING" id="224325.AF_1724"/>
<dbReference type="PaxDb" id="224325-AF_1724"/>
<dbReference type="EnsemblBacteria" id="AAB89527">
    <property type="protein sequence ID" value="AAB89527"/>
    <property type="gene ID" value="AF_1724"/>
</dbReference>
<dbReference type="KEGG" id="afu:AF_1724"/>
<dbReference type="eggNOG" id="arCOG04448">
    <property type="taxonomic scope" value="Archaea"/>
</dbReference>
<dbReference type="HOGENOM" id="CLU_024566_7_0_2"/>
<dbReference type="OrthoDB" id="114878at2157"/>
<dbReference type="PhylomeDB" id="O28550"/>
<dbReference type="Proteomes" id="UP000002199">
    <property type="component" value="Chromosome"/>
</dbReference>
<dbReference type="GO" id="GO:0016787">
    <property type="term" value="F:hydrolase activity"/>
    <property type="evidence" value="ECO:0007669"/>
    <property type="project" value="UniProtKB-KW"/>
</dbReference>
<dbReference type="Gene3D" id="1.10.4080.10">
    <property type="entry name" value="ADP-ribosylation/Crystallin J1"/>
    <property type="match status" value="1"/>
</dbReference>
<dbReference type="InterPro" id="IPR050792">
    <property type="entry name" value="ADP-ribosylglycohydrolase"/>
</dbReference>
<dbReference type="InterPro" id="IPR005502">
    <property type="entry name" value="Ribosyl_crysJ1"/>
</dbReference>
<dbReference type="InterPro" id="IPR036705">
    <property type="entry name" value="Ribosyl_crysJ1_sf"/>
</dbReference>
<dbReference type="PANTHER" id="PTHR16222">
    <property type="entry name" value="ADP-RIBOSYLGLYCOHYDROLASE"/>
    <property type="match status" value="1"/>
</dbReference>
<dbReference type="PANTHER" id="PTHR16222:SF24">
    <property type="entry name" value="ADP-RIBOSYLHYDROLASE ARH3"/>
    <property type="match status" value="1"/>
</dbReference>
<dbReference type="Pfam" id="PF03747">
    <property type="entry name" value="ADP_ribosyl_GH"/>
    <property type="match status" value="1"/>
</dbReference>
<dbReference type="SUPFAM" id="SSF101478">
    <property type="entry name" value="ADP-ribosylglycohydrolase"/>
    <property type="match status" value="1"/>
</dbReference>